<accession>Q37874</accession>
<sequence length="46" mass="5556">MMFEFYMAELLRHRWGRLRLYRFPGSVLTDYRILKNYAKTLKGAAA</sequence>
<feature type="chain" id="PRO_0000168658" description="Uncharacterized protein in rusA 3'region">
    <location>
        <begin position="1"/>
        <end position="46"/>
    </location>
</feature>
<protein>
    <recommendedName>
        <fullName>Uncharacterized protein in rusA 3'region</fullName>
    </recommendedName>
    <alternativeName>
        <fullName>ORF45</fullName>
    </alternativeName>
</protein>
<reference key="1">
    <citation type="journal article" date="1996" name="J. Mol. Biol.">
        <title>Holliday junction resolvases encoded by homologous rusA genes in Escherichia coli K-12 and phage 82.</title>
        <authorList>
            <person name="Mahdi A.A."/>
            <person name="Sharples G.J."/>
            <person name="Mandal T.N."/>
            <person name="Lloyd R.G."/>
        </authorList>
    </citation>
    <scope>NUCLEOTIDE SEQUENCE [GENOMIC DNA]</scope>
</reference>
<comment type="similarity">
    <text evidence="1">To E.coli ylcG.</text>
</comment>
<organismHost>
    <name type="scientific">Escherichia coli</name>
    <dbReference type="NCBI Taxonomy" id="562"/>
</organismHost>
<dbReference type="EMBL" id="X92588">
    <property type="protein sequence ID" value="CAA63331.1"/>
    <property type="molecule type" value="Genomic_DNA"/>
</dbReference>
<dbReference type="PIR" id="S66584">
    <property type="entry name" value="S66584"/>
</dbReference>
<dbReference type="InterPro" id="IPR049596">
    <property type="entry name" value="YlcG-like"/>
</dbReference>
<dbReference type="NCBIfam" id="NF033498">
    <property type="entry name" value="YlcG_phage_expr"/>
    <property type="match status" value="1"/>
</dbReference>
<proteinExistence type="predicted"/>
<evidence type="ECO:0000305" key="1"/>
<name>YLCG_BP82</name>
<organism>
    <name type="scientific">Enterobacteria phage 82</name>
    <name type="common">Bacteriophage 82</name>
    <dbReference type="NCBI Taxonomy" id="10705"/>
    <lineage>
        <taxon>Viruses</taxon>
        <taxon>Duplodnaviria</taxon>
        <taxon>Heunggongvirae</taxon>
        <taxon>Uroviricota</taxon>
        <taxon>Caudoviricetes</taxon>
        <taxon>Lambdavirus</taxon>
    </lineage>
</organism>